<feature type="signal peptide" evidence="2">
    <location>
        <begin position="1"/>
        <end position="20"/>
    </location>
</feature>
<feature type="chain" id="PRO_0000373204" description="Protein MGF 110-7L">
    <location>
        <begin position="21"/>
        <end position="137"/>
    </location>
</feature>
<feature type="glycosylation site" description="N-linked (GlcNAc...) asparagine; by host" evidence="2">
    <location>
        <position position="69"/>
    </location>
</feature>
<feature type="glycosylation site" description="N-linked (GlcNAc...) asparagine; by host" evidence="2">
    <location>
        <position position="70"/>
    </location>
</feature>
<feature type="glycosylation site" description="N-linked (GlcNAc...) asparagine; by host" evidence="2">
    <location>
        <position position="105"/>
    </location>
</feature>
<reference key="1">
    <citation type="submission" date="2003-03" db="EMBL/GenBank/DDBJ databases">
        <title>African swine fever virus genomes.</title>
        <authorList>
            <person name="Kutish G.F."/>
            <person name="Rock D.L."/>
        </authorList>
    </citation>
    <scope>NUCLEOTIDE SEQUENCE [LARGE SCALE GENOMIC DNA]</scope>
</reference>
<organism>
    <name type="scientific">African swine fever virus (isolate Pig/Kenya/KEN-50/1950)</name>
    <name type="common">ASFV</name>
    <dbReference type="NCBI Taxonomy" id="561445"/>
    <lineage>
        <taxon>Viruses</taxon>
        <taxon>Varidnaviria</taxon>
        <taxon>Bamfordvirae</taxon>
        <taxon>Nucleocytoviricota</taxon>
        <taxon>Pokkesviricetes</taxon>
        <taxon>Asfuvirales</taxon>
        <taxon>Asfarviridae</taxon>
        <taxon>Asfivirus</taxon>
        <taxon>African swine fever virus</taxon>
    </lineage>
</organism>
<proteinExistence type="inferred from homology"/>
<sequence length="137" mass="15994">MLVIILGVIGLLASSNLVSSSTSTRVGGHLPLTFDPPENELGYWCTYVESCRFCWDCEDGVCTSRIWGNNSTSIVENSYIKYCEVSRWGDQCRYDVEEHIYYTMNCSDPKPWNPYKIARKEWKKNEHFRKDLKKDEF</sequence>
<keyword id="KW-0325">Glycoprotein</keyword>
<keyword id="KW-0732">Signal</keyword>
<organismHost>
    <name type="scientific">Ornithodoros</name>
    <name type="common">relapsing fever ticks</name>
    <dbReference type="NCBI Taxonomy" id="6937"/>
</organismHost>
<organismHost>
    <name type="scientific">Phacochoerus aethiopicus</name>
    <name type="common">Warthog</name>
    <dbReference type="NCBI Taxonomy" id="85517"/>
</organismHost>
<organismHost>
    <name type="scientific">Phacochoerus africanus</name>
    <name type="common">Warthog</name>
    <dbReference type="NCBI Taxonomy" id="41426"/>
</organismHost>
<organismHost>
    <name type="scientific">Potamochoerus larvatus</name>
    <name type="common">Bushpig</name>
    <dbReference type="NCBI Taxonomy" id="273792"/>
</organismHost>
<organismHost>
    <name type="scientific">Sus scrofa</name>
    <name type="common">Pig</name>
    <dbReference type="NCBI Taxonomy" id="9823"/>
</organismHost>
<dbReference type="EMBL" id="AY261360">
    <property type="status" value="NOT_ANNOTATED_CDS"/>
    <property type="molecule type" value="Genomic_DNA"/>
</dbReference>
<dbReference type="Proteomes" id="UP000000861">
    <property type="component" value="Segment"/>
</dbReference>
<dbReference type="InterPro" id="IPR004848">
    <property type="entry name" value="ASFV_fam_110"/>
</dbReference>
<dbReference type="Pfam" id="PF01639">
    <property type="entry name" value="v110"/>
    <property type="match status" value="1"/>
</dbReference>
<gene>
    <name type="ordered locus">Ken-016</name>
</gene>
<accession>P0C9I2</accession>
<comment type="function">
    <text evidence="1">Plays a role in virus cell tropism, and may be required for efficient virus replication in macrophages.</text>
</comment>
<comment type="similarity">
    <text evidence="3">Belongs to the asfivirus MGF 110 family.</text>
</comment>
<evidence type="ECO:0000250" key="1"/>
<evidence type="ECO:0000255" key="2"/>
<evidence type="ECO:0000305" key="3"/>
<protein>
    <recommendedName>
        <fullName>Protein MGF 110-7L</fullName>
    </recommendedName>
</protein>
<name>1107L_ASFK5</name>